<proteinExistence type="inferred from homology"/>
<reference key="1">
    <citation type="journal article" date="1999" name="J. Mol. Evol.">
        <title>The plastid genome of the cryptophyte alga, Guillardia theta: complete sequence and conserved synteny groups confirm its common ancestry with red algae.</title>
        <authorList>
            <person name="Douglas S.E."/>
            <person name="Penny S.L."/>
        </authorList>
    </citation>
    <scope>NUCLEOTIDE SEQUENCE [LARGE SCALE GENOMIC DNA]</scope>
</reference>
<gene>
    <name type="primary">rpl34</name>
</gene>
<keyword id="KW-0150">Chloroplast</keyword>
<keyword id="KW-0934">Plastid</keyword>
<keyword id="KW-0687">Ribonucleoprotein</keyword>
<keyword id="KW-0689">Ribosomal protein</keyword>
<geneLocation type="chloroplast"/>
<sequence length="46" mass="5223">MTKRTLGGTNLKKARTSGFRARMKTAAGRNVLKNRRRKGRHKLISV</sequence>
<dbReference type="EMBL" id="AF041468">
    <property type="protein sequence ID" value="AAC35625.1"/>
    <property type="molecule type" value="Genomic_DNA"/>
</dbReference>
<dbReference type="RefSeq" id="NP_050691.1">
    <property type="nucleotide sequence ID" value="NC_000926.1"/>
</dbReference>
<dbReference type="SMR" id="O78440"/>
<dbReference type="GeneID" id="856983"/>
<dbReference type="HOGENOM" id="CLU_129938_2_1_1"/>
<dbReference type="GO" id="GO:0009507">
    <property type="term" value="C:chloroplast"/>
    <property type="evidence" value="ECO:0007669"/>
    <property type="project" value="UniProtKB-SubCell"/>
</dbReference>
<dbReference type="GO" id="GO:1990904">
    <property type="term" value="C:ribonucleoprotein complex"/>
    <property type="evidence" value="ECO:0007669"/>
    <property type="project" value="UniProtKB-KW"/>
</dbReference>
<dbReference type="GO" id="GO:0005840">
    <property type="term" value="C:ribosome"/>
    <property type="evidence" value="ECO:0007669"/>
    <property type="project" value="UniProtKB-KW"/>
</dbReference>
<dbReference type="GO" id="GO:0003735">
    <property type="term" value="F:structural constituent of ribosome"/>
    <property type="evidence" value="ECO:0007669"/>
    <property type="project" value="InterPro"/>
</dbReference>
<dbReference type="GO" id="GO:0006412">
    <property type="term" value="P:translation"/>
    <property type="evidence" value="ECO:0007669"/>
    <property type="project" value="UniProtKB-UniRule"/>
</dbReference>
<dbReference type="Gene3D" id="1.10.287.3980">
    <property type="match status" value="1"/>
</dbReference>
<dbReference type="HAMAP" id="MF_00391">
    <property type="entry name" value="Ribosomal_bL34"/>
    <property type="match status" value="1"/>
</dbReference>
<dbReference type="InterPro" id="IPR000271">
    <property type="entry name" value="Ribosomal_bL34"/>
</dbReference>
<dbReference type="InterPro" id="IPR020939">
    <property type="entry name" value="Ribosomal_bL34_CS"/>
</dbReference>
<dbReference type="NCBIfam" id="TIGR01030">
    <property type="entry name" value="rpmH_bact"/>
    <property type="match status" value="1"/>
</dbReference>
<dbReference type="Pfam" id="PF00468">
    <property type="entry name" value="Ribosomal_L34"/>
    <property type="match status" value="1"/>
</dbReference>
<dbReference type="PROSITE" id="PS00784">
    <property type="entry name" value="RIBOSOMAL_L34"/>
    <property type="match status" value="1"/>
</dbReference>
<accession>O78440</accession>
<feature type="chain" id="PRO_0000187516" description="Large ribosomal subunit protein bL34c">
    <location>
        <begin position="1"/>
        <end position="46"/>
    </location>
</feature>
<protein>
    <recommendedName>
        <fullName evidence="1">Large ribosomal subunit protein bL34c</fullName>
    </recommendedName>
    <alternativeName>
        <fullName>50S ribosomal protein L34, chloroplastic</fullName>
    </alternativeName>
</protein>
<organism>
    <name type="scientific">Guillardia theta</name>
    <name type="common">Cryptophyte</name>
    <name type="synonym">Cryptomonas phi</name>
    <dbReference type="NCBI Taxonomy" id="55529"/>
    <lineage>
        <taxon>Eukaryota</taxon>
        <taxon>Cryptophyceae</taxon>
        <taxon>Pyrenomonadales</taxon>
        <taxon>Geminigeraceae</taxon>
        <taxon>Guillardia</taxon>
    </lineage>
</organism>
<name>RK34_GUITH</name>
<evidence type="ECO:0000305" key="1"/>
<comment type="subcellular location">
    <subcellularLocation>
        <location>Plastid</location>
        <location>Chloroplast</location>
    </subcellularLocation>
</comment>
<comment type="similarity">
    <text evidence="1">Belongs to the bacterial ribosomal protein bL34 family.</text>
</comment>